<protein>
    <recommendedName>
        <fullName evidence="1">Potassium/proton antiporter CemA</fullName>
    </recommendedName>
    <alternativeName>
        <fullName evidence="1">Chloroplast envelope membrane protein A</fullName>
        <shortName evidence="1">CemA</shortName>
    </alternativeName>
</protein>
<feature type="chain" id="PRO_0000216662" description="Potassium/proton antiporter CemA">
    <location>
        <begin position="1"/>
        <end position="229"/>
    </location>
</feature>
<feature type="transmembrane region" description="Helical" evidence="1">
    <location>
        <begin position="7"/>
        <end position="27"/>
    </location>
</feature>
<feature type="transmembrane region" description="Helical" evidence="1">
    <location>
        <begin position="107"/>
        <end position="127"/>
    </location>
</feature>
<feature type="transmembrane region" description="Helical" evidence="1">
    <location>
        <begin position="154"/>
        <end position="174"/>
    </location>
</feature>
<feature type="transmembrane region" description="Helical" evidence="1">
    <location>
        <begin position="189"/>
        <end position="209"/>
    </location>
</feature>
<comment type="function">
    <text evidence="1">Contributes to K(+)/H(+) antiport activity by supporting proton efflux to control proton extrusion and homeostasis in chloroplasts in a light-dependent manner to modulate photosynthesis. Prevents excessive induction of non-photochemical quenching (NPQ) under continuous-light conditions. Indirectly promotes efficient inorganic carbon uptake into chloroplasts.</text>
</comment>
<comment type="catalytic activity">
    <reaction evidence="1">
        <text>K(+)(in) + H(+)(out) = K(+)(out) + H(+)(in)</text>
        <dbReference type="Rhea" id="RHEA:29467"/>
        <dbReference type="ChEBI" id="CHEBI:15378"/>
        <dbReference type="ChEBI" id="CHEBI:29103"/>
    </reaction>
</comment>
<comment type="subcellular location">
    <subcellularLocation>
        <location evidence="1">Plastid</location>
        <location evidence="1">Chloroplast inner membrane</location>
        <topology evidence="1">Multi-pass membrane protein</topology>
    </subcellularLocation>
</comment>
<comment type="similarity">
    <text evidence="1 2">Belongs to the CemA family.</text>
</comment>
<evidence type="ECO:0000255" key="1">
    <source>
        <dbReference type="HAMAP-Rule" id="MF_01308"/>
    </source>
</evidence>
<evidence type="ECO:0000305" key="2"/>
<accession>P49160</accession>
<accession>Q2PMS2</accession>
<dbReference type="EMBL" id="U26948">
    <property type="protein sequence ID" value="AAA80648.1"/>
    <property type="molecule type" value="Genomic_DNA"/>
</dbReference>
<dbReference type="EMBL" id="DQ317523">
    <property type="protein sequence ID" value="ABC25136.1"/>
    <property type="molecule type" value="Genomic_DNA"/>
</dbReference>
<dbReference type="PIR" id="T06346">
    <property type="entry name" value="T06346"/>
</dbReference>
<dbReference type="RefSeq" id="YP_538776.1">
    <property type="nucleotide sequence ID" value="NC_007942.1"/>
</dbReference>
<dbReference type="FunCoup" id="P49160">
    <property type="interactions" value="57"/>
</dbReference>
<dbReference type="STRING" id="3847.P49160"/>
<dbReference type="PaxDb" id="3847-GLYMA07G03190.1"/>
<dbReference type="GeneID" id="3989308"/>
<dbReference type="KEGG" id="gmx:3989308"/>
<dbReference type="eggNOG" id="ENOG502QV51">
    <property type="taxonomic scope" value="Eukaryota"/>
</dbReference>
<dbReference type="InParanoid" id="P49160"/>
<dbReference type="Proteomes" id="UP000008827">
    <property type="component" value="Chloroplast"/>
</dbReference>
<dbReference type="GO" id="GO:0009706">
    <property type="term" value="C:chloroplast inner membrane"/>
    <property type="evidence" value="ECO:0007669"/>
    <property type="project" value="UniProtKB-SubCell"/>
</dbReference>
<dbReference type="GO" id="GO:0015297">
    <property type="term" value="F:antiporter activity"/>
    <property type="evidence" value="ECO:0007669"/>
    <property type="project" value="UniProtKB-KW"/>
</dbReference>
<dbReference type="GO" id="GO:0015078">
    <property type="term" value="F:proton transmembrane transporter activity"/>
    <property type="evidence" value="ECO:0007669"/>
    <property type="project" value="UniProtKB-UniRule"/>
</dbReference>
<dbReference type="GO" id="GO:0006813">
    <property type="term" value="P:potassium ion transport"/>
    <property type="evidence" value="ECO:0007669"/>
    <property type="project" value="UniProtKB-UniRule"/>
</dbReference>
<dbReference type="HAMAP" id="MF_01308">
    <property type="entry name" value="CemA_PxcA"/>
    <property type="match status" value="1"/>
</dbReference>
<dbReference type="InterPro" id="IPR004282">
    <property type="entry name" value="CemA"/>
</dbReference>
<dbReference type="PANTHER" id="PTHR33650:SF2">
    <property type="entry name" value="CHLOROPLAST ENVELOPE MEMBRANE PROTEIN"/>
    <property type="match status" value="1"/>
</dbReference>
<dbReference type="PANTHER" id="PTHR33650">
    <property type="entry name" value="CHLOROPLAST ENVELOPE MEMBRANE PROTEIN-RELATED"/>
    <property type="match status" value="1"/>
</dbReference>
<dbReference type="Pfam" id="PF03040">
    <property type="entry name" value="CemA"/>
    <property type="match status" value="1"/>
</dbReference>
<sequence length="229" mass="27058">MTKKKTFIPLLYLTSIVFLPWCISFTFKKSLESWFIDWWNTRQSEIFLNDIKEKSILKKFIEFEELFFLDDMLKECPETHLQNLRTGIYKETIQLIKTHNEDRMNTILHFSTNIICFFILSGYSILGNQELVLINSLVREFIYNLSDTIKAFSILLLTDLCIGFHSTHGWELVIGFVYKDFGFAQNDQIISGLVSTFPVILDTILKYWIFRYLNRVSPSLVVIYHSMND</sequence>
<gene>
    <name evidence="1" type="primary">cemA</name>
    <name type="synonym">ycf10</name>
</gene>
<proteinExistence type="inferred from homology"/>
<geneLocation type="chloroplast"/>
<name>CEMA_SOYBN</name>
<keyword id="KW-0050">Antiport</keyword>
<keyword id="KW-0150">Chloroplast</keyword>
<keyword id="KW-0375">Hydrogen ion transport</keyword>
<keyword id="KW-0406">Ion transport</keyword>
<keyword id="KW-0472">Membrane</keyword>
<keyword id="KW-0934">Plastid</keyword>
<keyword id="KW-1001">Plastid inner membrane</keyword>
<keyword id="KW-0630">Potassium</keyword>
<keyword id="KW-0633">Potassium transport</keyword>
<keyword id="KW-1185">Reference proteome</keyword>
<keyword id="KW-0812">Transmembrane</keyword>
<keyword id="KW-1133">Transmembrane helix</keyword>
<keyword id="KW-0813">Transport</keyword>
<reference key="1">
    <citation type="online journal article" date="1995" name="Plant Gene Register">
        <title>The rps16, accD, psaI, ORF 203, ORF 151, ORF 103, ORF 229 and petA gene cluster in the chloroplast genome of soybean.</title>
        <authorList>
            <person name="Reverdatto S.V."/>
            <person name="Beilinson V."/>
            <person name="Nielsen N.C."/>
        </authorList>
        <locator>PGR95-051</locator>
    </citation>
    <scope>NUCLEOTIDE SEQUENCE [GENOMIC DNA]</scope>
    <source>
        <strain>cv. Resnik</strain>
        <tissue>Leaf</tissue>
    </source>
</reference>
<reference key="2">
    <citation type="journal article" date="2005" name="Plant Mol. Biol.">
        <title>Complete chloroplast genome sequence of Glycine max and comparative analyses with other legume genomes.</title>
        <authorList>
            <person name="Saski C."/>
            <person name="Lee S.-B."/>
            <person name="Daniell H."/>
            <person name="Wood T.C."/>
            <person name="Tomkins J."/>
            <person name="Kim H.-G."/>
            <person name="Jansen R.K."/>
        </authorList>
    </citation>
    <scope>NUCLEOTIDE SEQUENCE [LARGE SCALE GENOMIC DNA]</scope>
    <source>
        <strain>cv. PI 437654</strain>
    </source>
</reference>
<organism>
    <name type="scientific">Glycine max</name>
    <name type="common">Soybean</name>
    <name type="synonym">Glycine hispida</name>
    <dbReference type="NCBI Taxonomy" id="3847"/>
    <lineage>
        <taxon>Eukaryota</taxon>
        <taxon>Viridiplantae</taxon>
        <taxon>Streptophyta</taxon>
        <taxon>Embryophyta</taxon>
        <taxon>Tracheophyta</taxon>
        <taxon>Spermatophyta</taxon>
        <taxon>Magnoliopsida</taxon>
        <taxon>eudicotyledons</taxon>
        <taxon>Gunneridae</taxon>
        <taxon>Pentapetalae</taxon>
        <taxon>rosids</taxon>
        <taxon>fabids</taxon>
        <taxon>Fabales</taxon>
        <taxon>Fabaceae</taxon>
        <taxon>Papilionoideae</taxon>
        <taxon>50 kb inversion clade</taxon>
        <taxon>NPAAA clade</taxon>
        <taxon>indigoferoid/millettioid clade</taxon>
        <taxon>Phaseoleae</taxon>
        <taxon>Glycine</taxon>
        <taxon>Glycine subgen. Soja</taxon>
    </lineage>
</organism>